<feature type="chain" id="PRO_1000130071" description="Chaperonin GroEL">
    <location>
        <begin position="1"/>
        <end position="541"/>
    </location>
</feature>
<feature type="binding site" evidence="1">
    <location>
        <begin position="29"/>
        <end position="32"/>
    </location>
    <ligand>
        <name>ATP</name>
        <dbReference type="ChEBI" id="CHEBI:30616"/>
    </ligand>
</feature>
<feature type="binding site" evidence="1">
    <location>
        <begin position="86"/>
        <end position="90"/>
    </location>
    <ligand>
        <name>ATP</name>
        <dbReference type="ChEBI" id="CHEBI:30616"/>
    </ligand>
</feature>
<feature type="binding site" evidence="1">
    <location>
        <position position="413"/>
    </location>
    <ligand>
        <name>ATP</name>
        <dbReference type="ChEBI" id="CHEBI:30616"/>
    </ligand>
</feature>
<feature type="binding site" evidence="1">
    <location>
        <position position="495"/>
    </location>
    <ligand>
        <name>ATP</name>
        <dbReference type="ChEBI" id="CHEBI:30616"/>
    </ligand>
</feature>
<sequence length="541" mass="57891">MAKQIKYGEEARRALERGVNAVADTVKVTLGPRGRNVVLDKKYGSPTVTNDGVTIAREIELEDPFENQGAQLLKEVATKTNDVAGDGTTTATLLAQAMVREGLKNLAAGANPMLLRRGIAKAVDAAVEGLKRISKPIDNKESIAHVASISAADEEIGNLIAEAMDKVGKDGVITVEESKTLGTTLEVVEGMQFDRGYISPYMVTDAEKMEAVLEEPVILITDKKLSNIQDLLPLLEQVVQHGKKLLIIADDVEGEALATLVVNKLRGTFTCVAVKAPGFGDRRKEMLQDIAILTGGQVISEELGYDLKDVRLDMLGRARQVKVTKENTTIVGGAGDAAEIKKRVNQIKAQIEETTSDYDREKLQERLAKLAGGVAVIQAGAATETELKEKKHRIEDALAATKAAVEEGIVPGGGIALLNVIEDVQKVVDSLDGDFKTGAKIVLRALEEPVRQIAANAGVDGSVIVEKIKAAKDPNFGYDAYKEEFTDMFKAGIVDPTKVTRTALQNAASIASMILTTEAVVVDVPEKNTAMPNPGAGMDMM</sequence>
<protein>
    <recommendedName>
        <fullName evidence="1">Chaperonin GroEL</fullName>
        <ecNumber evidence="1">5.6.1.7</ecNumber>
    </recommendedName>
    <alternativeName>
        <fullName evidence="1">60 kDa chaperonin</fullName>
    </alternativeName>
    <alternativeName>
        <fullName evidence="1">Chaperonin-60</fullName>
        <shortName evidence="1">Cpn60</shortName>
    </alternativeName>
</protein>
<keyword id="KW-0067">ATP-binding</keyword>
<keyword id="KW-0143">Chaperone</keyword>
<keyword id="KW-0963">Cytoplasm</keyword>
<keyword id="KW-0413">Isomerase</keyword>
<keyword id="KW-0547">Nucleotide-binding</keyword>
<gene>
    <name evidence="1" type="primary">groEL</name>
    <name evidence="1" type="synonym">groL</name>
    <name type="ordered locus">Teth514_0513</name>
</gene>
<accession>B0K3P6</accession>
<dbReference type="EC" id="5.6.1.7" evidence="1"/>
<dbReference type="EMBL" id="CP000923">
    <property type="protein sequence ID" value="ABY91821.1"/>
    <property type="molecule type" value="Genomic_DNA"/>
</dbReference>
<dbReference type="RefSeq" id="WP_003866816.1">
    <property type="nucleotide sequence ID" value="NC_010320.1"/>
</dbReference>
<dbReference type="SMR" id="B0K3P6"/>
<dbReference type="KEGG" id="tex:Teth514_0513"/>
<dbReference type="HOGENOM" id="CLU_016503_3_0_9"/>
<dbReference type="Proteomes" id="UP000002155">
    <property type="component" value="Chromosome"/>
</dbReference>
<dbReference type="GO" id="GO:0005737">
    <property type="term" value="C:cytoplasm"/>
    <property type="evidence" value="ECO:0007669"/>
    <property type="project" value="UniProtKB-SubCell"/>
</dbReference>
<dbReference type="GO" id="GO:0005524">
    <property type="term" value="F:ATP binding"/>
    <property type="evidence" value="ECO:0007669"/>
    <property type="project" value="UniProtKB-UniRule"/>
</dbReference>
<dbReference type="GO" id="GO:0140662">
    <property type="term" value="F:ATP-dependent protein folding chaperone"/>
    <property type="evidence" value="ECO:0007669"/>
    <property type="project" value="InterPro"/>
</dbReference>
<dbReference type="GO" id="GO:0016853">
    <property type="term" value="F:isomerase activity"/>
    <property type="evidence" value="ECO:0007669"/>
    <property type="project" value="UniProtKB-KW"/>
</dbReference>
<dbReference type="GO" id="GO:0051082">
    <property type="term" value="F:unfolded protein binding"/>
    <property type="evidence" value="ECO:0007669"/>
    <property type="project" value="UniProtKB-UniRule"/>
</dbReference>
<dbReference type="GO" id="GO:0042026">
    <property type="term" value="P:protein refolding"/>
    <property type="evidence" value="ECO:0007669"/>
    <property type="project" value="UniProtKB-UniRule"/>
</dbReference>
<dbReference type="CDD" id="cd03344">
    <property type="entry name" value="GroEL"/>
    <property type="match status" value="1"/>
</dbReference>
<dbReference type="FunFam" id="3.50.7.10:FF:000001">
    <property type="entry name" value="60 kDa chaperonin"/>
    <property type="match status" value="1"/>
</dbReference>
<dbReference type="Gene3D" id="3.50.7.10">
    <property type="entry name" value="GroEL"/>
    <property type="match status" value="1"/>
</dbReference>
<dbReference type="Gene3D" id="1.10.560.10">
    <property type="entry name" value="GroEL-like equatorial domain"/>
    <property type="match status" value="1"/>
</dbReference>
<dbReference type="Gene3D" id="3.30.260.10">
    <property type="entry name" value="TCP-1-like chaperonin intermediate domain"/>
    <property type="match status" value="1"/>
</dbReference>
<dbReference type="HAMAP" id="MF_00600">
    <property type="entry name" value="CH60"/>
    <property type="match status" value="1"/>
</dbReference>
<dbReference type="InterPro" id="IPR018370">
    <property type="entry name" value="Chaperonin_Cpn60_CS"/>
</dbReference>
<dbReference type="InterPro" id="IPR001844">
    <property type="entry name" value="Cpn60/GroEL"/>
</dbReference>
<dbReference type="InterPro" id="IPR002423">
    <property type="entry name" value="Cpn60/GroEL/TCP-1"/>
</dbReference>
<dbReference type="InterPro" id="IPR027409">
    <property type="entry name" value="GroEL-like_apical_dom_sf"/>
</dbReference>
<dbReference type="InterPro" id="IPR027413">
    <property type="entry name" value="GROEL-like_equatorial_sf"/>
</dbReference>
<dbReference type="InterPro" id="IPR027410">
    <property type="entry name" value="TCP-1-like_intermed_sf"/>
</dbReference>
<dbReference type="NCBIfam" id="TIGR02348">
    <property type="entry name" value="GroEL"/>
    <property type="match status" value="1"/>
</dbReference>
<dbReference type="NCBIfam" id="NF000592">
    <property type="entry name" value="PRK00013.1"/>
    <property type="match status" value="1"/>
</dbReference>
<dbReference type="NCBIfam" id="NF009487">
    <property type="entry name" value="PRK12849.1"/>
    <property type="match status" value="1"/>
</dbReference>
<dbReference type="NCBIfam" id="NF009488">
    <property type="entry name" value="PRK12850.1"/>
    <property type="match status" value="1"/>
</dbReference>
<dbReference type="NCBIfam" id="NF009489">
    <property type="entry name" value="PRK12851.1"/>
    <property type="match status" value="1"/>
</dbReference>
<dbReference type="PANTHER" id="PTHR45633">
    <property type="entry name" value="60 KDA HEAT SHOCK PROTEIN, MITOCHONDRIAL"/>
    <property type="match status" value="1"/>
</dbReference>
<dbReference type="Pfam" id="PF00118">
    <property type="entry name" value="Cpn60_TCP1"/>
    <property type="match status" value="1"/>
</dbReference>
<dbReference type="PRINTS" id="PR00298">
    <property type="entry name" value="CHAPERONIN60"/>
</dbReference>
<dbReference type="SUPFAM" id="SSF52029">
    <property type="entry name" value="GroEL apical domain-like"/>
    <property type="match status" value="1"/>
</dbReference>
<dbReference type="SUPFAM" id="SSF48592">
    <property type="entry name" value="GroEL equatorial domain-like"/>
    <property type="match status" value="1"/>
</dbReference>
<dbReference type="SUPFAM" id="SSF54849">
    <property type="entry name" value="GroEL-intermediate domain like"/>
    <property type="match status" value="1"/>
</dbReference>
<dbReference type="PROSITE" id="PS00296">
    <property type="entry name" value="CHAPERONINS_CPN60"/>
    <property type="match status" value="1"/>
</dbReference>
<reference key="1">
    <citation type="submission" date="2008-01" db="EMBL/GenBank/DDBJ databases">
        <title>Complete sequence of Thermoanaerobacter sp. X514.</title>
        <authorList>
            <consortium name="US DOE Joint Genome Institute"/>
            <person name="Copeland A."/>
            <person name="Lucas S."/>
            <person name="Lapidus A."/>
            <person name="Barry K."/>
            <person name="Glavina del Rio T."/>
            <person name="Dalin E."/>
            <person name="Tice H."/>
            <person name="Pitluck S."/>
            <person name="Bruce D."/>
            <person name="Goodwin L."/>
            <person name="Saunders E."/>
            <person name="Brettin T."/>
            <person name="Detter J.C."/>
            <person name="Han C."/>
            <person name="Schmutz J."/>
            <person name="Larimer F."/>
            <person name="Land M."/>
            <person name="Hauser L."/>
            <person name="Kyrpides N."/>
            <person name="Kim E."/>
            <person name="Hemme C."/>
            <person name="Fields M.W."/>
            <person name="He Z."/>
            <person name="Zhou J."/>
            <person name="Richardson P."/>
        </authorList>
    </citation>
    <scope>NUCLEOTIDE SEQUENCE [LARGE SCALE GENOMIC DNA]</scope>
    <source>
        <strain>X514</strain>
    </source>
</reference>
<evidence type="ECO:0000255" key="1">
    <source>
        <dbReference type="HAMAP-Rule" id="MF_00600"/>
    </source>
</evidence>
<comment type="function">
    <text evidence="1">Together with its co-chaperonin GroES, plays an essential role in assisting protein folding. The GroEL-GroES system forms a nano-cage that allows encapsulation of the non-native substrate proteins and provides a physical environment optimized to promote and accelerate protein folding.</text>
</comment>
<comment type="catalytic activity">
    <reaction evidence="1">
        <text>ATP + H2O + a folded polypeptide = ADP + phosphate + an unfolded polypeptide.</text>
        <dbReference type="EC" id="5.6.1.7"/>
    </reaction>
</comment>
<comment type="subunit">
    <text evidence="1">Forms a cylinder of 14 subunits composed of two heptameric rings stacked back-to-back. Interacts with the co-chaperonin GroES.</text>
</comment>
<comment type="subcellular location">
    <subcellularLocation>
        <location evidence="1">Cytoplasm</location>
    </subcellularLocation>
</comment>
<comment type="similarity">
    <text evidence="1">Belongs to the chaperonin (HSP60) family.</text>
</comment>
<proteinExistence type="inferred from homology"/>
<organism>
    <name type="scientific">Thermoanaerobacter sp. (strain X514)</name>
    <dbReference type="NCBI Taxonomy" id="399726"/>
    <lineage>
        <taxon>Bacteria</taxon>
        <taxon>Bacillati</taxon>
        <taxon>Bacillota</taxon>
        <taxon>Clostridia</taxon>
        <taxon>Thermoanaerobacterales</taxon>
        <taxon>Thermoanaerobacteraceae</taxon>
        <taxon>Thermoanaerobacter</taxon>
    </lineage>
</organism>
<name>CH60_THEPX</name>